<gene>
    <name evidence="1" type="primary">pgi</name>
    <name type="ordered locus">BMA10247_1215</name>
</gene>
<organism>
    <name type="scientific">Burkholderia mallei (strain NCTC 10247)</name>
    <dbReference type="NCBI Taxonomy" id="320389"/>
    <lineage>
        <taxon>Bacteria</taxon>
        <taxon>Pseudomonadati</taxon>
        <taxon>Pseudomonadota</taxon>
        <taxon>Betaproteobacteria</taxon>
        <taxon>Burkholderiales</taxon>
        <taxon>Burkholderiaceae</taxon>
        <taxon>Burkholderia</taxon>
        <taxon>pseudomallei group</taxon>
    </lineage>
</organism>
<dbReference type="EC" id="5.3.1.9" evidence="1"/>
<dbReference type="EMBL" id="CP000548">
    <property type="protein sequence ID" value="ABO05551.1"/>
    <property type="molecule type" value="Genomic_DNA"/>
</dbReference>
<dbReference type="RefSeq" id="WP_004191382.1">
    <property type="nucleotide sequence ID" value="NZ_CP007802.1"/>
</dbReference>
<dbReference type="SMR" id="A3MKI3"/>
<dbReference type="GeneID" id="93060581"/>
<dbReference type="KEGG" id="bmaz:BM44_1893"/>
<dbReference type="KEGG" id="bmn:BMA10247_1215"/>
<dbReference type="PATRIC" id="fig|320389.8.peg.2127"/>
<dbReference type="UniPathway" id="UPA00109">
    <property type="reaction ID" value="UER00181"/>
</dbReference>
<dbReference type="UniPathway" id="UPA00138"/>
<dbReference type="GO" id="GO:0005829">
    <property type="term" value="C:cytosol"/>
    <property type="evidence" value="ECO:0007669"/>
    <property type="project" value="TreeGrafter"/>
</dbReference>
<dbReference type="GO" id="GO:0097367">
    <property type="term" value="F:carbohydrate derivative binding"/>
    <property type="evidence" value="ECO:0007669"/>
    <property type="project" value="InterPro"/>
</dbReference>
<dbReference type="GO" id="GO:0004347">
    <property type="term" value="F:glucose-6-phosphate isomerase activity"/>
    <property type="evidence" value="ECO:0007669"/>
    <property type="project" value="UniProtKB-UniRule"/>
</dbReference>
<dbReference type="GO" id="GO:0048029">
    <property type="term" value="F:monosaccharide binding"/>
    <property type="evidence" value="ECO:0007669"/>
    <property type="project" value="TreeGrafter"/>
</dbReference>
<dbReference type="GO" id="GO:0006094">
    <property type="term" value="P:gluconeogenesis"/>
    <property type="evidence" value="ECO:0007669"/>
    <property type="project" value="UniProtKB-UniRule"/>
</dbReference>
<dbReference type="GO" id="GO:0051156">
    <property type="term" value="P:glucose 6-phosphate metabolic process"/>
    <property type="evidence" value="ECO:0007669"/>
    <property type="project" value="TreeGrafter"/>
</dbReference>
<dbReference type="GO" id="GO:0006096">
    <property type="term" value="P:glycolytic process"/>
    <property type="evidence" value="ECO:0007669"/>
    <property type="project" value="UniProtKB-UniRule"/>
</dbReference>
<dbReference type="CDD" id="cd05015">
    <property type="entry name" value="SIS_PGI_1"/>
    <property type="match status" value="1"/>
</dbReference>
<dbReference type="CDD" id="cd05016">
    <property type="entry name" value="SIS_PGI_2"/>
    <property type="match status" value="1"/>
</dbReference>
<dbReference type="Gene3D" id="1.10.1390.10">
    <property type="match status" value="1"/>
</dbReference>
<dbReference type="Gene3D" id="3.40.50.10490">
    <property type="entry name" value="Glucose-6-phosphate isomerase like protein, domain 1"/>
    <property type="match status" value="2"/>
</dbReference>
<dbReference type="HAMAP" id="MF_00473">
    <property type="entry name" value="G6P_isomerase"/>
    <property type="match status" value="1"/>
</dbReference>
<dbReference type="InterPro" id="IPR001672">
    <property type="entry name" value="G6P_Isomerase"/>
</dbReference>
<dbReference type="InterPro" id="IPR023096">
    <property type="entry name" value="G6P_Isomerase_C"/>
</dbReference>
<dbReference type="InterPro" id="IPR018189">
    <property type="entry name" value="Phosphoglucose_isomerase_CS"/>
</dbReference>
<dbReference type="InterPro" id="IPR046348">
    <property type="entry name" value="SIS_dom_sf"/>
</dbReference>
<dbReference type="InterPro" id="IPR035476">
    <property type="entry name" value="SIS_PGI_1"/>
</dbReference>
<dbReference type="InterPro" id="IPR035482">
    <property type="entry name" value="SIS_PGI_2"/>
</dbReference>
<dbReference type="NCBIfam" id="NF001211">
    <property type="entry name" value="PRK00179.1"/>
    <property type="match status" value="1"/>
</dbReference>
<dbReference type="PANTHER" id="PTHR11469">
    <property type="entry name" value="GLUCOSE-6-PHOSPHATE ISOMERASE"/>
    <property type="match status" value="1"/>
</dbReference>
<dbReference type="PANTHER" id="PTHR11469:SF1">
    <property type="entry name" value="GLUCOSE-6-PHOSPHATE ISOMERASE"/>
    <property type="match status" value="1"/>
</dbReference>
<dbReference type="Pfam" id="PF00342">
    <property type="entry name" value="PGI"/>
    <property type="match status" value="1"/>
</dbReference>
<dbReference type="PRINTS" id="PR00662">
    <property type="entry name" value="G6PISOMERASE"/>
</dbReference>
<dbReference type="SUPFAM" id="SSF53697">
    <property type="entry name" value="SIS domain"/>
    <property type="match status" value="1"/>
</dbReference>
<dbReference type="PROSITE" id="PS00765">
    <property type="entry name" value="P_GLUCOSE_ISOMERASE_1"/>
    <property type="match status" value="1"/>
</dbReference>
<dbReference type="PROSITE" id="PS00174">
    <property type="entry name" value="P_GLUCOSE_ISOMERASE_2"/>
    <property type="match status" value="1"/>
</dbReference>
<dbReference type="PROSITE" id="PS51463">
    <property type="entry name" value="P_GLUCOSE_ISOMERASE_3"/>
    <property type="match status" value="1"/>
</dbReference>
<evidence type="ECO:0000255" key="1">
    <source>
        <dbReference type="HAMAP-Rule" id="MF_00473"/>
    </source>
</evidence>
<reference key="1">
    <citation type="journal article" date="2010" name="Genome Biol. Evol.">
        <title>Continuing evolution of Burkholderia mallei through genome reduction and large-scale rearrangements.</title>
        <authorList>
            <person name="Losada L."/>
            <person name="Ronning C.M."/>
            <person name="DeShazer D."/>
            <person name="Woods D."/>
            <person name="Fedorova N."/>
            <person name="Kim H.S."/>
            <person name="Shabalina S.A."/>
            <person name="Pearson T.R."/>
            <person name="Brinkac L."/>
            <person name="Tan P."/>
            <person name="Nandi T."/>
            <person name="Crabtree J."/>
            <person name="Badger J."/>
            <person name="Beckstrom-Sternberg S."/>
            <person name="Saqib M."/>
            <person name="Schutzer S.E."/>
            <person name="Keim P."/>
            <person name="Nierman W.C."/>
        </authorList>
    </citation>
    <scope>NUCLEOTIDE SEQUENCE [LARGE SCALE GENOMIC DNA]</scope>
    <source>
        <strain>NCTC 10247</strain>
    </source>
</reference>
<proteinExistence type="inferred from homology"/>
<comment type="function">
    <text evidence="1">Catalyzes the reversible isomerization of glucose-6-phosphate to fructose-6-phosphate.</text>
</comment>
<comment type="catalytic activity">
    <reaction evidence="1">
        <text>alpha-D-glucose 6-phosphate = beta-D-fructose 6-phosphate</text>
        <dbReference type="Rhea" id="RHEA:11816"/>
        <dbReference type="ChEBI" id="CHEBI:57634"/>
        <dbReference type="ChEBI" id="CHEBI:58225"/>
        <dbReference type="EC" id="5.3.1.9"/>
    </reaction>
</comment>
<comment type="pathway">
    <text evidence="1">Carbohydrate biosynthesis; gluconeogenesis.</text>
</comment>
<comment type="pathway">
    <text evidence="1">Carbohydrate degradation; glycolysis; D-glyceraldehyde 3-phosphate and glycerone phosphate from D-glucose: step 2/4.</text>
</comment>
<comment type="subcellular location">
    <subcellularLocation>
        <location evidence="1">Cytoplasm</location>
    </subcellularLocation>
</comment>
<comment type="similarity">
    <text evidence="1">Belongs to the GPI family.</text>
</comment>
<keyword id="KW-0963">Cytoplasm</keyword>
<keyword id="KW-0312">Gluconeogenesis</keyword>
<keyword id="KW-0324">Glycolysis</keyword>
<keyword id="KW-0413">Isomerase</keyword>
<name>G6PI_BURM7</name>
<sequence length="540" mass="58843">MTLNSLPVWPALQAHYEEIRDAHLRDWFAPANDRAPTRAERFTFEGGGLAADFSKNRLTDATLALLVRLAREAGVEARRDAMFAGETVNPTEGRAALHTALRANAPDAPFQAQVAAERAKMARFADAVRSGAWTGYTGKRIRHVVNIGIGGSDLGPKMVVHALHHVATPDIATHFVSNVDGADLARVLERIDPEETLAIIVSKTFTTLETMTNARSLRDWFVANGCPEGALAKHFVGVSANPAEVVKFGIAEANVFEMWDWVGGRYSLWSAVGLSIMIAIGPERFDELLAGARDMDEHFRTAPLERNLPVLQGLVGIWYRNFFGAQSYLVAPYSEALHYLPSYLQQLEMESNGKSARIDGAFVDYPTSAVTWGEPGTNGQHAFFQMLHQGPTLVPIDFIAVLTPEHPLASHHPKLLANCFAQSEALMLGRTLDEARKIAGPAKPELAPHLTFPGNRPTTTLLVDALTPRTLGALIALYEHKVLVQAAVWNINPFDQWGVELGKILGKVVEADLTAAQVDPAKHDSSTSALIARARKALGE</sequence>
<protein>
    <recommendedName>
        <fullName evidence="1">Glucose-6-phosphate isomerase</fullName>
        <shortName evidence="1">GPI</shortName>
        <ecNumber evidence="1">5.3.1.9</ecNumber>
    </recommendedName>
    <alternativeName>
        <fullName evidence="1">Phosphoglucose isomerase</fullName>
        <shortName evidence="1">PGI</shortName>
    </alternativeName>
    <alternativeName>
        <fullName evidence="1">Phosphohexose isomerase</fullName>
        <shortName evidence="1">PHI</shortName>
    </alternativeName>
</protein>
<accession>A3MKI3</accession>
<feature type="chain" id="PRO_1000013946" description="Glucose-6-phosphate isomerase">
    <location>
        <begin position="1"/>
        <end position="540"/>
    </location>
</feature>
<feature type="active site" description="Proton donor" evidence="1">
    <location>
        <position position="350"/>
    </location>
</feature>
<feature type="active site" evidence="1">
    <location>
        <position position="381"/>
    </location>
</feature>
<feature type="active site" evidence="1">
    <location>
        <position position="503"/>
    </location>
</feature>